<evidence type="ECO:0000250" key="1">
    <source>
        <dbReference type="UniProtKB" id="P12883"/>
    </source>
</evidence>
<evidence type="ECO:0000250" key="2">
    <source>
        <dbReference type="UniProtKB" id="Q9H6N6"/>
    </source>
</evidence>
<evidence type="ECO:0000255" key="3"/>
<evidence type="ECO:0000255" key="4">
    <source>
        <dbReference type="PROSITE-ProRule" id="PRU00116"/>
    </source>
</evidence>
<evidence type="ECO:0000255" key="5">
    <source>
        <dbReference type="PROSITE-ProRule" id="PRU00782"/>
    </source>
</evidence>
<evidence type="ECO:0000255" key="6">
    <source>
        <dbReference type="PROSITE-ProRule" id="PRU01190"/>
    </source>
</evidence>
<evidence type="ECO:0000256" key="7">
    <source>
        <dbReference type="SAM" id="MobiDB-lite"/>
    </source>
</evidence>
<evidence type="ECO:0000303" key="8">
    <source>
    </source>
</evidence>
<evidence type="ECO:0000305" key="9"/>
<gene>
    <name evidence="2" type="primary">MYH16</name>
</gene>
<reference key="1">
    <citation type="journal article" date="2005" name="Nature">
        <title>Genome sequence, comparative analysis and haplotype structure of the domestic dog.</title>
        <authorList>
            <person name="Lindblad-Toh K."/>
            <person name="Wade C.M."/>
            <person name="Mikkelsen T.S."/>
            <person name="Karlsson E.K."/>
            <person name="Jaffe D.B."/>
            <person name="Kamal M."/>
            <person name="Clamp M."/>
            <person name="Chang J.L."/>
            <person name="Kulbokas E.J. III"/>
            <person name="Zody M.C."/>
            <person name="Mauceli E."/>
            <person name="Xie X."/>
            <person name="Breen M."/>
            <person name="Wayne R.K."/>
            <person name="Ostrander E.A."/>
            <person name="Ponting C.P."/>
            <person name="Galibert F."/>
            <person name="Smith D.R."/>
            <person name="deJong P.J."/>
            <person name="Kirkness E.F."/>
            <person name="Alvarez P."/>
            <person name="Biagi T."/>
            <person name="Brockman W."/>
            <person name="Butler J."/>
            <person name="Chin C.-W."/>
            <person name="Cook A."/>
            <person name="Cuff J."/>
            <person name="Daly M.J."/>
            <person name="DeCaprio D."/>
            <person name="Gnerre S."/>
            <person name="Grabherr M."/>
            <person name="Kellis M."/>
            <person name="Kleber M."/>
            <person name="Bardeleben C."/>
            <person name="Goodstadt L."/>
            <person name="Heger A."/>
            <person name="Hitte C."/>
            <person name="Kim L."/>
            <person name="Koepfli K.-P."/>
            <person name="Parker H.G."/>
            <person name="Pollinger J.P."/>
            <person name="Searle S.M.J."/>
            <person name="Sutter N.B."/>
            <person name="Thomas R."/>
            <person name="Webber C."/>
            <person name="Baldwin J."/>
            <person name="Abebe A."/>
            <person name="Abouelleil A."/>
            <person name="Aftuck L."/>
            <person name="Ait-Zahra M."/>
            <person name="Aldredge T."/>
            <person name="Allen N."/>
            <person name="An P."/>
            <person name="Anderson S."/>
            <person name="Antoine C."/>
            <person name="Arachchi H."/>
            <person name="Aslam A."/>
            <person name="Ayotte L."/>
            <person name="Bachantsang P."/>
            <person name="Barry A."/>
            <person name="Bayul T."/>
            <person name="Benamara M."/>
            <person name="Berlin A."/>
            <person name="Bessette D."/>
            <person name="Blitshteyn B."/>
            <person name="Bloom T."/>
            <person name="Blye J."/>
            <person name="Boguslavskiy L."/>
            <person name="Bonnet C."/>
            <person name="Boukhgalter B."/>
            <person name="Brown A."/>
            <person name="Cahill P."/>
            <person name="Calixte N."/>
            <person name="Camarata J."/>
            <person name="Cheshatsang Y."/>
            <person name="Chu J."/>
            <person name="Citroen M."/>
            <person name="Collymore A."/>
            <person name="Cooke P."/>
            <person name="Dawoe T."/>
            <person name="Daza R."/>
            <person name="Decktor K."/>
            <person name="DeGray S."/>
            <person name="Dhargay N."/>
            <person name="Dooley K."/>
            <person name="Dooley K."/>
            <person name="Dorje P."/>
            <person name="Dorjee K."/>
            <person name="Dorris L."/>
            <person name="Duffey N."/>
            <person name="Dupes A."/>
            <person name="Egbiremolen O."/>
            <person name="Elong R."/>
            <person name="Falk J."/>
            <person name="Farina A."/>
            <person name="Faro S."/>
            <person name="Ferguson D."/>
            <person name="Ferreira P."/>
            <person name="Fisher S."/>
            <person name="FitzGerald M."/>
            <person name="Foley K."/>
            <person name="Foley C."/>
            <person name="Franke A."/>
            <person name="Friedrich D."/>
            <person name="Gage D."/>
            <person name="Garber M."/>
            <person name="Gearin G."/>
            <person name="Giannoukos G."/>
            <person name="Goode T."/>
            <person name="Goyette A."/>
            <person name="Graham J."/>
            <person name="Grandbois E."/>
            <person name="Gyaltsen K."/>
            <person name="Hafez N."/>
            <person name="Hagopian D."/>
            <person name="Hagos B."/>
            <person name="Hall J."/>
            <person name="Healy C."/>
            <person name="Hegarty R."/>
            <person name="Honan T."/>
            <person name="Horn A."/>
            <person name="Houde N."/>
            <person name="Hughes L."/>
            <person name="Hunnicutt L."/>
            <person name="Husby M."/>
            <person name="Jester B."/>
            <person name="Jones C."/>
            <person name="Kamat A."/>
            <person name="Kanga B."/>
            <person name="Kells C."/>
            <person name="Khazanovich D."/>
            <person name="Kieu A.C."/>
            <person name="Kisner P."/>
            <person name="Kumar M."/>
            <person name="Lance K."/>
            <person name="Landers T."/>
            <person name="Lara M."/>
            <person name="Lee W."/>
            <person name="Leger J.-P."/>
            <person name="Lennon N."/>
            <person name="Leuper L."/>
            <person name="LeVine S."/>
            <person name="Liu J."/>
            <person name="Liu X."/>
            <person name="Lokyitsang Y."/>
            <person name="Lokyitsang T."/>
            <person name="Lui A."/>
            <person name="Macdonald J."/>
            <person name="Major J."/>
            <person name="Marabella R."/>
            <person name="Maru K."/>
            <person name="Matthews C."/>
            <person name="McDonough S."/>
            <person name="Mehta T."/>
            <person name="Meldrim J."/>
            <person name="Melnikov A."/>
            <person name="Meneus L."/>
            <person name="Mihalev A."/>
            <person name="Mihova T."/>
            <person name="Miller K."/>
            <person name="Mittelman R."/>
            <person name="Mlenga V."/>
            <person name="Mulrain L."/>
            <person name="Munson G."/>
            <person name="Navidi A."/>
            <person name="Naylor J."/>
            <person name="Nguyen T."/>
            <person name="Nguyen N."/>
            <person name="Nguyen C."/>
            <person name="Nguyen T."/>
            <person name="Nicol R."/>
            <person name="Norbu N."/>
            <person name="Norbu C."/>
            <person name="Novod N."/>
            <person name="Nyima T."/>
            <person name="Olandt P."/>
            <person name="O'Neill B."/>
            <person name="O'Neill K."/>
            <person name="Osman S."/>
            <person name="Oyono L."/>
            <person name="Patti C."/>
            <person name="Perrin D."/>
            <person name="Phunkhang P."/>
            <person name="Pierre F."/>
            <person name="Priest M."/>
            <person name="Rachupka A."/>
            <person name="Raghuraman S."/>
            <person name="Rameau R."/>
            <person name="Ray V."/>
            <person name="Raymond C."/>
            <person name="Rege F."/>
            <person name="Rise C."/>
            <person name="Rogers J."/>
            <person name="Rogov P."/>
            <person name="Sahalie J."/>
            <person name="Settipalli S."/>
            <person name="Sharpe T."/>
            <person name="Shea T."/>
            <person name="Sheehan M."/>
            <person name="Sherpa N."/>
            <person name="Shi J."/>
            <person name="Shih D."/>
            <person name="Sloan J."/>
            <person name="Smith C."/>
            <person name="Sparrow T."/>
            <person name="Stalker J."/>
            <person name="Stange-Thomann N."/>
            <person name="Stavropoulos S."/>
            <person name="Stone C."/>
            <person name="Stone S."/>
            <person name="Sykes S."/>
            <person name="Tchuinga P."/>
            <person name="Tenzing P."/>
            <person name="Tesfaye S."/>
            <person name="Thoulutsang D."/>
            <person name="Thoulutsang Y."/>
            <person name="Topham K."/>
            <person name="Topping I."/>
            <person name="Tsamla T."/>
            <person name="Vassiliev H."/>
            <person name="Venkataraman V."/>
            <person name="Vo A."/>
            <person name="Wangchuk T."/>
            <person name="Wangdi T."/>
            <person name="Weiand M."/>
            <person name="Wilkinson J."/>
            <person name="Wilson A."/>
            <person name="Yadav S."/>
            <person name="Yang S."/>
            <person name="Yang X."/>
            <person name="Young G."/>
            <person name="Yu Q."/>
            <person name="Zainoun J."/>
            <person name="Zembek L."/>
            <person name="Zimmer A."/>
            <person name="Lander E.S."/>
        </authorList>
    </citation>
    <scope>NUCLEOTIDE SEQUENCE [LARGE SCALE GENOMIC DNA]</scope>
    <source>
        <strain>Boxer</strain>
    </source>
</reference>
<reference key="2">
    <citation type="journal article" date="2004" name="Nature">
        <title>Myosin gene mutation correlates with anatomical changes in the human lineage.</title>
        <authorList>
            <person name="Stedman H.H."/>
            <person name="Kozyak B.W."/>
            <person name="Nelson A."/>
            <person name="Thesier D.M."/>
            <person name="Su L.T."/>
            <person name="Low D.W."/>
            <person name="Bridges C.R."/>
            <person name="Shrager J.B."/>
            <person name="Minugh-Purvis N."/>
            <person name="Mitchell M.A."/>
        </authorList>
    </citation>
    <scope>FUNCTION</scope>
</reference>
<keyword id="KW-0009">Actin-binding</keyword>
<keyword id="KW-0067">ATP-binding</keyword>
<keyword id="KW-0175">Coiled coil</keyword>
<keyword id="KW-0963">Cytoplasm</keyword>
<keyword id="KW-0505">Motor protein</keyword>
<keyword id="KW-0518">Myosin</keyword>
<keyword id="KW-0547">Nucleotide-binding</keyword>
<keyword id="KW-1185">Reference proteome</keyword>
<proteinExistence type="inferred from homology"/>
<organism>
    <name type="scientific">Canis lupus familiaris</name>
    <name type="common">Dog</name>
    <name type="synonym">Canis familiaris</name>
    <dbReference type="NCBI Taxonomy" id="9615"/>
    <lineage>
        <taxon>Eukaryota</taxon>
        <taxon>Metazoa</taxon>
        <taxon>Chordata</taxon>
        <taxon>Craniata</taxon>
        <taxon>Vertebrata</taxon>
        <taxon>Euteleostomi</taxon>
        <taxon>Mammalia</taxon>
        <taxon>Eutheria</taxon>
        <taxon>Laurasiatheria</taxon>
        <taxon>Carnivora</taxon>
        <taxon>Caniformia</taxon>
        <taxon>Canidae</taxon>
        <taxon>Canis</taxon>
    </lineage>
</organism>
<sequence>MPGGYKGECGDDVDPMPFLAPPEKERIEAMNKPYDIKKSCWVKDEKEGFIAGEIQSEQGDQVTVKTVNNQTVTVKKDDVQQMNPPKFYQASDMADMTFLNEASVLNNLRQRYTNMRIYTYSGLFCVTVNPYKWLPIYGARVANMYKGKKRTEMPPHLFSISDNAYHDMLMNRENQSMLITGESGAGKTENTKKVIQYFANVGGTGKQSSDGKGQGSLEDQIIQANPVLEAFGNAKTIRNNNSSRFGKFIRIHFGTTGKLAGADIESYLLEKSRVISQQAAERGYHIFYQILSNKKPELIESLLLVPNPKEYHWVSQGVTVVENMDDGEELQITDVAFDVLGFSAEEKIGIYKLTGGIMHFGNMKFKQKPREEQAEVDTTEVADKVSHLMGLNSGELQKGITRPRVKVGNEFVQKGQNVEQCNNSIGALGKAIYDKMFKWLVVRINKTLDTKMQRQFFIGVLDIAGFEIFEFNSFEQLCINFTNEKLQQFFNHHMFVLEQEEYKREGIEWVFIDFGLDLQACIDLLEKPMGIFSILEEQCVFPKATDATFKAALYDNHLGKSNNFLKPKGGKGKGPEAHFELVHYAGTVAYNITGWLEKNKDPLNETVVGLFQKSSLGLLALLFKEEEAPAGSKKQKRGSSFMTVSNFYREQLNKLMATLHSTAPHFVRCIVPNEFKQSGVVDAHLIMHQLACNGVLEGIRICRKGFPNRMQYPEFKQRYQVLNPNVIPQGFVDNKKASELLLGSIDLDVNEYKIGHTKVFFRAGILAKLEDMRDERLAKIMTMLQCRLRGFLMRIEFKKMLERRIGLKVIQRNTRKFLELRFWGWWKLYNKVKPLLNVARQEEEMKAKEEELRNAMSKTQELLSRVKELEEKMATLSQEKNDLTIQLQAEQENVIDAEERLTQMMKTKMDLESQISDMRERLEEEEGTAASLSATKRKLEGEMSDLKRDLEGLETTLAKTEKEKQALDHRVRTLTGDLSLREDSIAKLQKEKRALEELHQKTLDDLQAEEDKVNHLTKTNSKLSTQIHELEDNWEQEKKIRAEVEKARRKAESDLKMTIDNLNDMERSKLDLEEVVKKRDMEINSVNSKYEDEQSLNSTLQRKLKEHQARIEELEEELEAERSMRAKVEKQRSDLSRDLEDLSDRLEEAGGATSAQIEQNRKREAELLKLRRELEEAALQSEAAASTLRKKHTDSMAELTEHVENLQRVKSKLEKDKQVMKAEIDDLNASMETVQKSKMNAEAHIRKLEDSLSEANAKVAELERNQAEINAVRTRLQAENGELSREYEESQSRLNQILRIKTSLTSQVDDYKRQLDEESKSRSAAMVSLANTKHDLDLVKEQLEEEQGGKSELQRLVSKLNTEVTTWRTKYETDAIQRTEELEETKRKLAARLQEAEETAEAAQARAASLEKNKQRLQAEVEDLTIDLEKANAAAAALDKKQRVFDKMLAEWQQKCEELQVEVDSSQKECRMYMTESFKIKTAYEESLEHLESVKKENKTLQEEIKELIDQLGEGGRSVHELQKLKKKLEIEKEELQVALEEAESSLEVEESKVIRIQLELAQVKADIDRRIHEKEEEFEATRKNHQRAIESLQASLEAEAKGRAEALRLKKKMETDLNEMEIQLDHANKNNSELVKTLKRLQQQIKDLQVQMDEDARQHEELREQYNLQERRLSLLQTELEEVRSGLEGSERSRKLLEQEVVEITERHNEVNIQNQSLLVVKRKLESDVQRISSEHEELISEFRSADERAKKAMTDAARMAEELRQEQDHCMHLEKIKKNYEITIKDLQAKMEEAEQLALKGGKRTIMKLEARIKELETELDGEQKQHVETVKTLRKNERRLKELVFQTEEDHKTNQRMQELVEKLQNKLKVYKRQIEEAEEQANQTLARYRKTVHELDDAEERAGMAETALNKLRTRHRVAGKGITSV</sequence>
<protein>
    <recommendedName>
        <fullName evidence="9">Myosin-16</fullName>
    </recommendedName>
    <alternativeName>
        <fullName evidence="9">Myosin heavy chain 16</fullName>
    </alternativeName>
</protein>
<feature type="chain" id="PRO_0000433094" description="Myosin-16">
    <location>
        <begin position="1"/>
        <end position="1930"/>
    </location>
</feature>
<feature type="domain" description="Myosin N-terminal SH3-like" evidence="6">
    <location>
        <begin position="35"/>
        <end position="84"/>
    </location>
</feature>
<feature type="domain" description="Myosin motor" evidence="5">
    <location>
        <begin position="88"/>
        <end position="774"/>
    </location>
</feature>
<feature type="domain" description="IQ" evidence="4">
    <location>
        <begin position="777"/>
        <end position="806"/>
    </location>
</feature>
<feature type="region of interest" description="Actin-binding" evidence="1">
    <location>
        <begin position="652"/>
        <end position="674"/>
    </location>
</feature>
<feature type="region of interest" description="Actin-binding" evidence="1">
    <location>
        <begin position="753"/>
        <end position="767"/>
    </location>
</feature>
<feature type="region of interest" description="Disordered" evidence="7">
    <location>
        <begin position="1116"/>
        <end position="1137"/>
    </location>
</feature>
<feature type="coiled-coil region" evidence="3">
    <location>
        <begin position="835"/>
        <end position="1921"/>
    </location>
</feature>
<feature type="compositionally biased region" description="Basic and acidic residues" evidence="7">
    <location>
        <begin position="1120"/>
        <end position="1137"/>
    </location>
</feature>
<feature type="binding site" evidence="1">
    <location>
        <begin position="181"/>
        <end position="188"/>
    </location>
    <ligand>
        <name>ATP</name>
        <dbReference type="ChEBI" id="CHEBI:30616"/>
    </ligand>
</feature>
<accession>F1PT61</accession>
<name>MYH16_CANLF</name>
<dbReference type="EMBL" id="AAEX03004277">
    <property type="status" value="NOT_ANNOTATED_CDS"/>
    <property type="molecule type" value="Genomic_DNA"/>
</dbReference>
<dbReference type="EMBL" id="AAEX03004278">
    <property type="status" value="NOT_ANNOTATED_CDS"/>
    <property type="molecule type" value="Genomic_DNA"/>
</dbReference>
<dbReference type="SMR" id="F1PT61"/>
<dbReference type="FunCoup" id="F1PT61">
    <property type="interactions" value="28"/>
</dbReference>
<dbReference type="STRING" id="9615.ENSCAFP00000022286"/>
<dbReference type="PaxDb" id="9612-ENSCAFP00000022286"/>
<dbReference type="eggNOG" id="KOG0161">
    <property type="taxonomic scope" value="Eukaryota"/>
</dbReference>
<dbReference type="HOGENOM" id="CLU_000192_4_0_1"/>
<dbReference type="InParanoid" id="F1PT61"/>
<dbReference type="OMA" id="NMEQCQN"/>
<dbReference type="TreeFam" id="TF314375"/>
<dbReference type="Proteomes" id="UP000002254">
    <property type="component" value="Unplaced"/>
</dbReference>
<dbReference type="Proteomes" id="UP000694429">
    <property type="component" value="Unplaced"/>
</dbReference>
<dbReference type="Proteomes" id="UP000694542">
    <property type="component" value="Unplaced"/>
</dbReference>
<dbReference type="Proteomes" id="UP000805418">
    <property type="component" value="Unplaced"/>
</dbReference>
<dbReference type="GO" id="GO:0005737">
    <property type="term" value="C:cytoplasm"/>
    <property type="evidence" value="ECO:0000318"/>
    <property type="project" value="GO_Central"/>
</dbReference>
<dbReference type="GO" id="GO:0030016">
    <property type="term" value="C:myofibril"/>
    <property type="evidence" value="ECO:0007669"/>
    <property type="project" value="UniProtKB-SubCell"/>
</dbReference>
<dbReference type="GO" id="GO:0032982">
    <property type="term" value="C:myosin filament"/>
    <property type="evidence" value="ECO:0000318"/>
    <property type="project" value="GO_Central"/>
</dbReference>
<dbReference type="GO" id="GO:0016460">
    <property type="term" value="C:myosin II complex"/>
    <property type="evidence" value="ECO:0000318"/>
    <property type="project" value="GO_Central"/>
</dbReference>
<dbReference type="GO" id="GO:0051015">
    <property type="term" value="F:actin filament binding"/>
    <property type="evidence" value="ECO:0000318"/>
    <property type="project" value="GO_Central"/>
</dbReference>
<dbReference type="GO" id="GO:0005524">
    <property type="term" value="F:ATP binding"/>
    <property type="evidence" value="ECO:0007669"/>
    <property type="project" value="UniProtKB-KW"/>
</dbReference>
<dbReference type="GO" id="GO:0000146">
    <property type="term" value="F:microfilament motor activity"/>
    <property type="evidence" value="ECO:0000318"/>
    <property type="project" value="GO_Central"/>
</dbReference>
<dbReference type="CDD" id="cd14934">
    <property type="entry name" value="MYSc_Myh16"/>
    <property type="match status" value="1"/>
</dbReference>
<dbReference type="FunFam" id="1.10.10.820:FF:000001">
    <property type="entry name" value="Myosin heavy chain"/>
    <property type="match status" value="1"/>
</dbReference>
<dbReference type="FunFam" id="1.20.5.340:FF:000003">
    <property type="entry name" value="Myosin heavy chain"/>
    <property type="match status" value="1"/>
</dbReference>
<dbReference type="FunFam" id="1.20.5.370:FF:000001">
    <property type="entry name" value="Myosin heavy chain"/>
    <property type="match status" value="1"/>
</dbReference>
<dbReference type="FunFam" id="1.20.5.370:FF:000008">
    <property type="entry name" value="Myosin heavy chain"/>
    <property type="match status" value="1"/>
</dbReference>
<dbReference type="FunFam" id="1.20.58.530:FF:000001">
    <property type="entry name" value="Myosin heavy chain"/>
    <property type="match status" value="1"/>
</dbReference>
<dbReference type="FunFam" id="2.30.30.360:FF:000001">
    <property type="entry name" value="Myosin heavy chain"/>
    <property type="match status" value="1"/>
</dbReference>
<dbReference type="FunFam" id="1.20.5.4820:FF:000002">
    <property type="entry name" value="Myosin heavy chain 10"/>
    <property type="match status" value="1"/>
</dbReference>
<dbReference type="FunFam" id="1.20.5.340:FF:000021">
    <property type="entry name" value="Myosin heavy chain, isoform G"/>
    <property type="match status" value="1"/>
</dbReference>
<dbReference type="FunFam" id="1.20.5.370:FF:000009">
    <property type="entry name" value="Myosin heavy chain, isoform G"/>
    <property type="match status" value="1"/>
</dbReference>
<dbReference type="FunFam" id="1.20.5.370:FF:000010">
    <property type="entry name" value="Myosin heavy chain, isoform G"/>
    <property type="match status" value="1"/>
</dbReference>
<dbReference type="FunFam" id="3.40.850.10:FF:000024">
    <property type="entry name" value="Myosin heavy chain, isoform J"/>
    <property type="match status" value="1"/>
</dbReference>
<dbReference type="FunFam" id="1.20.120.720:FF:000001">
    <property type="entry name" value="Myosin heavy chain, muscle"/>
    <property type="match status" value="1"/>
</dbReference>
<dbReference type="Gene3D" id="1.10.10.820">
    <property type="match status" value="1"/>
</dbReference>
<dbReference type="Gene3D" id="1.20.5.340">
    <property type="match status" value="5"/>
</dbReference>
<dbReference type="Gene3D" id="1.20.5.370">
    <property type="match status" value="4"/>
</dbReference>
<dbReference type="Gene3D" id="1.20.5.4820">
    <property type="match status" value="1"/>
</dbReference>
<dbReference type="Gene3D" id="1.20.58.530">
    <property type="match status" value="1"/>
</dbReference>
<dbReference type="Gene3D" id="3.40.850.10">
    <property type="entry name" value="Kinesin motor domain"/>
    <property type="match status" value="1"/>
</dbReference>
<dbReference type="Gene3D" id="2.30.30.360">
    <property type="entry name" value="Myosin S1 fragment, N-terminal"/>
    <property type="match status" value="1"/>
</dbReference>
<dbReference type="Gene3D" id="1.20.120.720">
    <property type="entry name" value="Myosin VI head, motor domain, U50 subdomain"/>
    <property type="match status" value="1"/>
</dbReference>
<dbReference type="InterPro" id="IPR036961">
    <property type="entry name" value="Kinesin_motor_dom_sf"/>
</dbReference>
<dbReference type="InterPro" id="IPR001609">
    <property type="entry name" value="Myosin_head_motor_dom-like"/>
</dbReference>
<dbReference type="InterPro" id="IPR004009">
    <property type="entry name" value="Myosin_N"/>
</dbReference>
<dbReference type="InterPro" id="IPR008989">
    <property type="entry name" value="Myosin_S1_N"/>
</dbReference>
<dbReference type="InterPro" id="IPR002928">
    <property type="entry name" value="Myosin_tail"/>
</dbReference>
<dbReference type="InterPro" id="IPR027417">
    <property type="entry name" value="P-loop_NTPase"/>
</dbReference>
<dbReference type="InterPro" id="IPR014751">
    <property type="entry name" value="XRCC4-like_C"/>
</dbReference>
<dbReference type="PANTHER" id="PTHR45615">
    <property type="entry name" value="MYOSIN HEAVY CHAIN, NON-MUSCLE"/>
    <property type="match status" value="1"/>
</dbReference>
<dbReference type="PANTHER" id="PTHR45615:SF50">
    <property type="entry name" value="MYOSIN-16"/>
    <property type="match status" value="1"/>
</dbReference>
<dbReference type="Pfam" id="PF00063">
    <property type="entry name" value="Myosin_head"/>
    <property type="match status" value="1"/>
</dbReference>
<dbReference type="Pfam" id="PF02736">
    <property type="entry name" value="Myosin_N"/>
    <property type="match status" value="1"/>
</dbReference>
<dbReference type="Pfam" id="PF01576">
    <property type="entry name" value="Myosin_tail_1"/>
    <property type="match status" value="1"/>
</dbReference>
<dbReference type="PRINTS" id="PR00193">
    <property type="entry name" value="MYOSINHEAVY"/>
</dbReference>
<dbReference type="SMART" id="SM00242">
    <property type="entry name" value="MYSc"/>
    <property type="match status" value="1"/>
</dbReference>
<dbReference type="SUPFAM" id="SSF90257">
    <property type="entry name" value="Myosin rod fragments"/>
    <property type="match status" value="5"/>
</dbReference>
<dbReference type="SUPFAM" id="SSF52540">
    <property type="entry name" value="P-loop containing nucleoside triphosphate hydrolases"/>
    <property type="match status" value="1"/>
</dbReference>
<dbReference type="SUPFAM" id="SSF57997">
    <property type="entry name" value="Tropomyosin"/>
    <property type="match status" value="1"/>
</dbReference>
<dbReference type="PROSITE" id="PS50096">
    <property type="entry name" value="IQ"/>
    <property type="match status" value="1"/>
</dbReference>
<dbReference type="PROSITE" id="PS51456">
    <property type="entry name" value="MYOSIN_MOTOR"/>
    <property type="match status" value="1"/>
</dbReference>
<dbReference type="PROSITE" id="PS51844">
    <property type="entry name" value="SH3_LIKE"/>
    <property type="match status" value="1"/>
</dbReference>
<comment type="function">
    <text evidence="8">May play a role in masticatory muscles contraction.</text>
</comment>
<comment type="subcellular location">
    <subcellularLocation>
        <location>Cytoplasm</location>
        <location>Myofibril</location>
    </subcellularLocation>
    <text evidence="9">Thick filaments of the myofibrils.</text>
</comment>
<comment type="domain">
    <text evidence="9">The rodlike tail sequence is highly repetitive, showing cycles of a 28-residue repeat pattern composed of 4 heptapeptides, characteristic for alpha-helical coiled coils.</text>
</comment>
<comment type="domain">
    <text evidence="9">Limited proteolysis of myosin heavy chain produces 1 light meromyosin (LMM) and 1 heavy meromyosin (HMM). HMM can be further cleaved into 2 globular subfragments (S1) and 1 rod-shaped subfragment (S2).</text>
</comment>
<comment type="similarity">
    <text evidence="9">Belongs to the TRAFAC class myosin-kinesin ATPase superfamily. Myosin family.</text>
</comment>
<comment type="caution">
    <text evidence="9">Represents a conventional myosin. This protein should not be confused with the unconventional myosin-XVI (MYO16).</text>
</comment>